<accession>Q23794</accession>
<accession>Q23793</accession>
<sequence>MSDSPVKKGRGRPAKAKPEETASPKAAKKEEKKVEEVPKKIEESTKPENGAAPKKGRGRPSKGDKAAPKRPASGKGRGRPAKNAKKVDDADTEEVNSSD</sequence>
<dbReference type="EMBL" id="Z36897">
    <property type="protein sequence ID" value="CAA85364.1"/>
    <property type="molecule type" value="Genomic_DNA"/>
</dbReference>
<dbReference type="EMBL" id="Z36898">
    <property type="protein sequence ID" value="CAA85365.1"/>
    <property type="molecule type" value="mRNA"/>
</dbReference>
<dbReference type="PIR" id="A55819">
    <property type="entry name" value="A55819"/>
</dbReference>
<dbReference type="iPTMnet" id="Q23794"/>
<dbReference type="GO" id="GO:0005694">
    <property type="term" value="C:chromosome"/>
    <property type="evidence" value="ECO:0007669"/>
    <property type="project" value="UniProtKB-SubCell"/>
</dbReference>
<dbReference type="GO" id="GO:0005730">
    <property type="term" value="C:nucleolus"/>
    <property type="evidence" value="ECO:0000314"/>
    <property type="project" value="UniProtKB"/>
</dbReference>
<dbReference type="GO" id="GO:0005667">
    <property type="term" value="C:transcription regulator complex"/>
    <property type="evidence" value="ECO:0000314"/>
    <property type="project" value="UniProtKB"/>
</dbReference>
<dbReference type="GO" id="GO:0003700">
    <property type="term" value="F:DNA-binding transcription factor activity"/>
    <property type="evidence" value="ECO:0000314"/>
    <property type="project" value="UniProtKB"/>
</dbReference>
<dbReference type="GO" id="GO:0003680">
    <property type="term" value="F:minor groove of adenine-thymine-rich DNA binding"/>
    <property type="evidence" value="ECO:0000314"/>
    <property type="project" value="UniProtKB"/>
</dbReference>
<dbReference type="InterPro" id="IPR017956">
    <property type="entry name" value="AT_hook_DNA-bd_motif"/>
</dbReference>
<dbReference type="PRINTS" id="PR00929">
    <property type="entry name" value="ATHOOK"/>
</dbReference>
<dbReference type="SMART" id="SM00384">
    <property type="entry name" value="AT_hook"/>
    <property type="match status" value="3"/>
</dbReference>
<proteinExistence type="evidence at protein level"/>
<reference evidence="6 7" key="1">
    <citation type="journal article" date="1994" name="J. Biol. Chem.">
        <title>Insect proteins homologous to mammalian high mobility group proteins I/Y (HMG I/Y). Characterization and binding to linear and four-way junction DNA.</title>
        <authorList>
            <person name="Claus P."/>
            <person name="Schulze E."/>
            <person name="Wisniewski J.R."/>
        </authorList>
    </citation>
    <scope>NUCLEOTIDE SEQUENCE [GENOMIC DNA / MRNA]</scope>
    <scope>PARTIAL PROTEIN SEQUENCE</scope>
    <scope>FUNCTION</scope>
    <scope>SUBCELLULAR LOCATION</scope>
    <source>
        <tissue evidence="3">Embryonic epithelium</tissue>
        <tissue evidence="3">Salivary gland</tissue>
    </source>
</reference>
<reference evidence="6" key="2">
    <citation type="journal article" date="1997" name="Chromosoma">
        <title>High mobility group proteins cHMG1a, cHMG1b, and cHMGI are distinctly distributed in chromosomes and differentially expressed during ecdysone dependent cell differentiation.</title>
        <authorList>
            <person name="Ghidelli S."/>
            <person name="Claus P."/>
            <person name="Thies G."/>
            <person name="Wisniewski J.R."/>
        </authorList>
    </citation>
    <scope>FUNCTION</scope>
    <scope>SUBCELLULAR LOCATION</scope>
</reference>
<reference evidence="6" key="3">
    <citation type="journal article" date="1997" name="J. Biol. Chem.">
        <title>Cdc2 and mitogen-activated protein kinases modulate DNA binding properties of the putative transcriptional regulator Chironomus high mobility group protein I.</title>
        <authorList>
            <person name="Schwanbeck R."/>
            <person name="Wisniewski J.R."/>
        </authorList>
    </citation>
    <scope>PHOSPHORYLATION AT SER-4; SER-23 AND SER-73</scope>
</reference>
<reference evidence="6" key="4">
    <citation type="journal article" date="2001" name="J. Biol. Chem.">
        <title>Distinct organization of DNA complexes of various HMGI/Y family proteins and their modulation upon mitotic phosphorylation.</title>
        <authorList>
            <person name="Piekielko A."/>
            <person name="Drung A."/>
            <person name="Rogalla P."/>
            <person name="Schwanbeck R."/>
            <person name="Heyduk T."/>
            <person name="Gerharz M."/>
            <person name="Bullerdiek J."/>
            <person name="Wisniewski J.R."/>
        </authorList>
    </citation>
    <scope>DNA-BINDING ACTIVITY</scope>
</reference>
<keyword id="KW-0158">Chromosome</keyword>
<keyword id="KW-0903">Direct protein sequencing</keyword>
<keyword id="KW-0238">DNA-binding</keyword>
<keyword id="KW-0539">Nucleus</keyword>
<keyword id="KW-0597">Phosphoprotein</keyword>
<keyword id="KW-0677">Repeat</keyword>
<keyword id="KW-0804">Transcription</keyword>
<keyword id="KW-0805">Transcription regulation</keyword>
<comment type="function">
    <text evidence="3 4">Binds preferentially to the minor groove of A+T rich regions in double-stranded DNA via the second and third DBA-binding domains. It is suggested that these proteins could function in nucleosome phasing and in the 3'-end processing of mRNA transcripts. They are also involved in the transcription regulation of genes containing, or in close proximity to A+T-rich regions.</text>
</comment>
<comment type="subcellular location">
    <subcellularLocation>
        <location>Nucleus</location>
        <location>Nucleolus</location>
    </subcellularLocation>
    <subcellularLocation>
        <location>Chromosome</location>
    </subcellularLocation>
    <text evidence="3 4">In chromosomal puffs.</text>
</comment>
<comment type="PTM">
    <text evidence="5">Phosphorylated in a cell-cycle dependent manner; substantially reduced in cells that have finished proliferating and are differentiated. Phosphorylation at Ser-4 and Ser-23 results in a 10-fold weakening of DNA-binding activity and altered the mode of protein-DNA interaction.</text>
</comment>
<comment type="similarity">
    <text evidence="1">Belongs to the HMGA family.</text>
</comment>
<evidence type="ECO:0000255" key="1"/>
<evidence type="ECO:0000256" key="2">
    <source>
        <dbReference type="SAM" id="MobiDB-lite"/>
    </source>
</evidence>
<evidence type="ECO:0000269" key="3">
    <source>
    </source>
</evidence>
<evidence type="ECO:0000269" key="4">
    <source>
    </source>
</evidence>
<evidence type="ECO:0000269" key="5">
    <source>
    </source>
</evidence>
<evidence type="ECO:0000305" key="6"/>
<evidence type="ECO:0000312" key="7">
    <source>
        <dbReference type="EMBL" id="CAA85365.1"/>
    </source>
</evidence>
<organism>
    <name type="scientific">Chironomus tentans</name>
    <name type="common">Midge</name>
    <name type="synonym">Camptochironomus tentans</name>
    <dbReference type="NCBI Taxonomy" id="7153"/>
    <lineage>
        <taxon>Eukaryota</taxon>
        <taxon>Metazoa</taxon>
        <taxon>Ecdysozoa</taxon>
        <taxon>Arthropoda</taxon>
        <taxon>Hexapoda</taxon>
        <taxon>Insecta</taxon>
        <taxon>Pterygota</taxon>
        <taxon>Neoptera</taxon>
        <taxon>Endopterygota</taxon>
        <taxon>Diptera</taxon>
        <taxon>Nematocera</taxon>
        <taxon>Chironomoidea</taxon>
        <taxon>Chironomidae</taxon>
        <taxon>Chironominae</taxon>
        <taxon>Chironomus</taxon>
    </lineage>
</organism>
<feature type="initiator methionine" description="Removed" evidence="3">
    <location>
        <position position="1"/>
    </location>
</feature>
<feature type="chain" id="PRO_0000289153" description="High mobility group protein I">
    <location>
        <begin position="2"/>
        <end position="99"/>
    </location>
</feature>
<feature type="DNA-binding region" description="A.T hook 1" evidence="1">
    <location>
        <begin position="7"/>
        <end position="19"/>
    </location>
</feature>
<feature type="DNA-binding region" description="A.T hook 2" evidence="1">
    <location>
        <begin position="54"/>
        <end position="66"/>
    </location>
</feature>
<feature type="DNA-binding region" description="A.T hook 3" evidence="1">
    <location>
        <begin position="74"/>
        <end position="86"/>
    </location>
</feature>
<feature type="region of interest" description="Disordered" evidence="2">
    <location>
        <begin position="1"/>
        <end position="99"/>
    </location>
</feature>
<feature type="compositionally biased region" description="Basic and acidic residues" evidence="2">
    <location>
        <begin position="16"/>
        <end position="46"/>
    </location>
</feature>
<feature type="compositionally biased region" description="Acidic residues" evidence="2">
    <location>
        <begin position="90"/>
        <end position="99"/>
    </location>
</feature>
<feature type="modified residue" description="Phosphoserine; by CDC2 and MAPK" evidence="5">
    <location>
        <position position="4"/>
    </location>
</feature>
<feature type="modified residue" description="Phosphoserine; by MAPK" evidence="5">
    <location>
        <position position="23"/>
    </location>
</feature>
<feature type="modified residue" description="Phosphoserine; by PKC" evidence="5">
    <location>
        <position position="73"/>
    </location>
</feature>
<feature type="sequence conflict" description="In Ref. 1; CAA85364." evidence="6" ref="1">
    <original>T</original>
    <variation>A</variation>
    <location>
        <position position="92"/>
    </location>
</feature>
<name>HMGA1_CHITE</name>
<protein>
    <recommendedName>
        <fullName>High mobility group protein I</fullName>
        <shortName>HMG-I</shortName>
    </recommendedName>
    <alternativeName>
        <fullName>High mobility group AT-hook protein 1</fullName>
        <shortName>High mobility group protein A1</shortName>
    </alternativeName>
    <alternativeName>
        <fullName>cHMG1</fullName>
    </alternativeName>
</protein>